<keyword id="KW-0963">Cytoplasm</keyword>
<keyword id="KW-0238">DNA-binding</keyword>
<keyword id="KW-1185">Reference proteome</keyword>
<keyword id="KW-0804">Transcription</keyword>
<keyword id="KW-0805">Transcription regulation</keyword>
<reference key="1">
    <citation type="submission" date="2006-03" db="EMBL/GenBank/DDBJ databases">
        <title>Complete genome sequence of Francisella tularensis LVS (Live Vaccine Strain).</title>
        <authorList>
            <person name="Chain P."/>
            <person name="Larimer F."/>
            <person name="Land M."/>
            <person name="Stilwagen S."/>
            <person name="Larsson P."/>
            <person name="Bearden S."/>
            <person name="Chu M."/>
            <person name="Oyston P."/>
            <person name="Forsman M."/>
            <person name="Andersson S."/>
            <person name="Lindler L."/>
            <person name="Titball R."/>
            <person name="Garcia E."/>
        </authorList>
    </citation>
    <scope>NUCLEOTIDE SEQUENCE [LARGE SCALE GENOMIC DNA]</scope>
    <source>
        <strain>LVS</strain>
    </source>
</reference>
<accession>Q2A3R0</accession>
<feature type="chain" id="PRO_0000257066" description="Probable transcriptional regulatory protein FTL_0929">
    <location>
        <begin position="1"/>
        <end position="248"/>
    </location>
</feature>
<organism>
    <name type="scientific">Francisella tularensis subsp. holarctica (strain LVS)</name>
    <dbReference type="NCBI Taxonomy" id="376619"/>
    <lineage>
        <taxon>Bacteria</taxon>
        <taxon>Pseudomonadati</taxon>
        <taxon>Pseudomonadota</taxon>
        <taxon>Gammaproteobacteria</taxon>
        <taxon>Thiotrichales</taxon>
        <taxon>Francisellaceae</taxon>
        <taxon>Francisella</taxon>
    </lineage>
</organism>
<sequence>MAGHSKWANIKHKKAKEDAKRGKIFTKLIREITVAARLGGGDKDANPRLRAAIATALANNMSKDTIERAIVKGAGGDESANVEEVRYEGYGPGGVAIIVDCMTDNRNRTVGEVRHAFTKSGGNLGTDGSVAYMFTKRGIISFAPGVDEDALMEVALEAGAEDIITHEDGSIDVYTDPHDFSDIQEVLIEKGFNSENAEVTFDAETKAELDTETAEKVMALIDKLEDLDYVQSVYSNANFTQELIEQIG</sequence>
<comment type="subcellular location">
    <subcellularLocation>
        <location evidence="1">Cytoplasm</location>
    </subcellularLocation>
</comment>
<comment type="similarity">
    <text evidence="1">Belongs to the TACO1 family.</text>
</comment>
<gene>
    <name type="ordered locus">FTL_0929</name>
</gene>
<dbReference type="EMBL" id="AM233362">
    <property type="protein sequence ID" value="CAJ79368.1"/>
    <property type="molecule type" value="Genomic_DNA"/>
</dbReference>
<dbReference type="RefSeq" id="WP_003015700.1">
    <property type="nucleotide sequence ID" value="NZ_CP009694.1"/>
</dbReference>
<dbReference type="SMR" id="Q2A3R0"/>
<dbReference type="KEGG" id="ftl:FTL_0929"/>
<dbReference type="Proteomes" id="UP000001944">
    <property type="component" value="Chromosome"/>
</dbReference>
<dbReference type="GO" id="GO:0005829">
    <property type="term" value="C:cytosol"/>
    <property type="evidence" value="ECO:0007669"/>
    <property type="project" value="TreeGrafter"/>
</dbReference>
<dbReference type="GO" id="GO:0003677">
    <property type="term" value="F:DNA binding"/>
    <property type="evidence" value="ECO:0007669"/>
    <property type="project" value="UniProtKB-UniRule"/>
</dbReference>
<dbReference type="GO" id="GO:0006355">
    <property type="term" value="P:regulation of DNA-templated transcription"/>
    <property type="evidence" value="ECO:0007669"/>
    <property type="project" value="UniProtKB-UniRule"/>
</dbReference>
<dbReference type="FunFam" id="1.10.10.200:FF:000001">
    <property type="entry name" value="Probable transcriptional regulatory protein YebC"/>
    <property type="match status" value="1"/>
</dbReference>
<dbReference type="FunFam" id="3.30.70.980:FF:000002">
    <property type="entry name" value="Probable transcriptional regulatory protein YebC"/>
    <property type="match status" value="1"/>
</dbReference>
<dbReference type="Gene3D" id="1.10.10.200">
    <property type="match status" value="1"/>
</dbReference>
<dbReference type="Gene3D" id="3.30.70.980">
    <property type="match status" value="2"/>
</dbReference>
<dbReference type="HAMAP" id="MF_00693">
    <property type="entry name" value="Transcrip_reg_TACO1"/>
    <property type="match status" value="1"/>
</dbReference>
<dbReference type="InterPro" id="IPR017856">
    <property type="entry name" value="Integrase-like_N"/>
</dbReference>
<dbReference type="InterPro" id="IPR048300">
    <property type="entry name" value="TACO1_YebC-like_2nd/3rd_dom"/>
</dbReference>
<dbReference type="InterPro" id="IPR049083">
    <property type="entry name" value="TACO1_YebC_N"/>
</dbReference>
<dbReference type="InterPro" id="IPR002876">
    <property type="entry name" value="Transcrip_reg_TACO1-like"/>
</dbReference>
<dbReference type="InterPro" id="IPR026564">
    <property type="entry name" value="Transcrip_reg_TACO1-like_dom3"/>
</dbReference>
<dbReference type="InterPro" id="IPR029072">
    <property type="entry name" value="YebC-like"/>
</dbReference>
<dbReference type="NCBIfam" id="NF001030">
    <property type="entry name" value="PRK00110.1"/>
    <property type="match status" value="1"/>
</dbReference>
<dbReference type="NCBIfam" id="NF009044">
    <property type="entry name" value="PRK12378.1"/>
    <property type="match status" value="1"/>
</dbReference>
<dbReference type="NCBIfam" id="TIGR01033">
    <property type="entry name" value="YebC/PmpR family DNA-binding transcriptional regulator"/>
    <property type="match status" value="1"/>
</dbReference>
<dbReference type="PANTHER" id="PTHR12532:SF6">
    <property type="entry name" value="TRANSCRIPTIONAL REGULATORY PROTEIN YEBC-RELATED"/>
    <property type="match status" value="1"/>
</dbReference>
<dbReference type="PANTHER" id="PTHR12532">
    <property type="entry name" value="TRANSLATIONAL ACTIVATOR OF CYTOCHROME C OXIDASE 1"/>
    <property type="match status" value="1"/>
</dbReference>
<dbReference type="Pfam" id="PF20772">
    <property type="entry name" value="TACO1_YebC_N"/>
    <property type="match status" value="1"/>
</dbReference>
<dbReference type="Pfam" id="PF01709">
    <property type="entry name" value="Transcrip_reg"/>
    <property type="match status" value="1"/>
</dbReference>
<dbReference type="SUPFAM" id="SSF75625">
    <property type="entry name" value="YebC-like"/>
    <property type="match status" value="1"/>
</dbReference>
<name>Y929_FRATH</name>
<evidence type="ECO:0000255" key="1">
    <source>
        <dbReference type="HAMAP-Rule" id="MF_00693"/>
    </source>
</evidence>
<protein>
    <recommendedName>
        <fullName evidence="1">Probable transcriptional regulatory protein FTL_0929</fullName>
    </recommendedName>
</protein>
<proteinExistence type="inferred from homology"/>